<name>OSW5_YEAS1</name>
<gene>
    <name type="primary">OSW5</name>
    <name type="ORF">SCRG_02039</name>
</gene>
<evidence type="ECO:0000250" key="1"/>
<evidence type="ECO:0000250" key="2">
    <source>
        <dbReference type="UniProtKB" id="P40219"/>
    </source>
</evidence>
<evidence type="ECO:0000255" key="3"/>
<evidence type="ECO:0000256" key="4">
    <source>
        <dbReference type="SAM" id="MobiDB-lite"/>
    </source>
</evidence>
<evidence type="ECO:0000305" key="5"/>
<dbReference type="EMBL" id="CH408047">
    <property type="protein sequence ID" value="EDV11639.1"/>
    <property type="molecule type" value="Genomic_DNA"/>
</dbReference>
<dbReference type="SMR" id="B3LM36"/>
<dbReference type="HOGENOM" id="CLU_147574_0_0_1"/>
<dbReference type="OrthoDB" id="41863at4893"/>
<dbReference type="Proteomes" id="UP000008335">
    <property type="component" value="Unassembled WGS sequence"/>
</dbReference>
<dbReference type="GO" id="GO:0016020">
    <property type="term" value="C:membrane"/>
    <property type="evidence" value="ECO:0007669"/>
    <property type="project" value="UniProtKB-SubCell"/>
</dbReference>
<dbReference type="GO" id="GO:0030435">
    <property type="term" value="P:sporulation resulting in formation of a cellular spore"/>
    <property type="evidence" value="ECO:0007669"/>
    <property type="project" value="UniProtKB-KW"/>
</dbReference>
<dbReference type="InterPro" id="IPR031430">
    <property type="entry name" value="Osw5"/>
</dbReference>
<dbReference type="Pfam" id="PF17062">
    <property type="entry name" value="Osw5"/>
    <property type="match status" value="1"/>
</dbReference>
<proteinExistence type="inferred from homology"/>
<organism>
    <name type="scientific">Saccharomyces cerevisiae (strain RM11-1a)</name>
    <name type="common">Baker's yeast</name>
    <dbReference type="NCBI Taxonomy" id="285006"/>
    <lineage>
        <taxon>Eukaryota</taxon>
        <taxon>Fungi</taxon>
        <taxon>Dikarya</taxon>
        <taxon>Ascomycota</taxon>
        <taxon>Saccharomycotina</taxon>
        <taxon>Saccharomycetes</taxon>
        <taxon>Saccharomycetales</taxon>
        <taxon>Saccharomycetaceae</taxon>
        <taxon>Saccharomyces</taxon>
    </lineage>
</organism>
<sequence length="148" mass="16384">MVSTATFFFFVYLTLFVVIGFFSSLFIIPLLGISFVFAIGVVSFGFCSNMSFKMAQLIYVRADAFLKKVLDKMALQTQPAQLQEPQEPLSTLRPVSNPTIPSPLRQTARPSKFVTEEDVIFEPVSAQSAIARSLETTANKAGNKFQLS</sequence>
<protein>
    <recommendedName>
        <fullName>Outer spore wall protein 5</fullName>
    </recommendedName>
</protein>
<keyword id="KW-0472">Membrane</keyword>
<keyword id="KW-0597">Phosphoprotein</keyword>
<keyword id="KW-0749">Sporulation</keyword>
<keyword id="KW-0812">Transmembrane</keyword>
<keyword id="KW-1133">Transmembrane helix</keyword>
<comment type="function">
    <text evidence="1">Involved in spore wall assembly.</text>
</comment>
<comment type="subcellular location">
    <subcellularLocation>
        <location evidence="1">Membrane</location>
        <topology evidence="1">Multi-pass membrane protein</topology>
    </subcellularLocation>
</comment>
<comment type="similarity">
    <text evidence="5">Belongs to the OSW5 family.</text>
</comment>
<feature type="chain" id="PRO_0000405526" description="Outer spore wall protein 5">
    <location>
        <begin position="1"/>
        <end position="148"/>
    </location>
</feature>
<feature type="topological domain" description="Cytoplasmic" evidence="3">
    <location>
        <begin position="1"/>
        <end position="7"/>
    </location>
</feature>
<feature type="transmembrane region" description="Helical" evidence="3">
    <location>
        <begin position="8"/>
        <end position="28"/>
    </location>
</feature>
<feature type="topological domain" description="Extracellular" evidence="3">
    <location>
        <position position="29"/>
    </location>
</feature>
<feature type="transmembrane region" description="Helical" evidence="3">
    <location>
        <begin position="30"/>
        <end position="50"/>
    </location>
</feature>
<feature type="topological domain" description="Cytoplasmic" evidence="3">
    <location>
        <begin position="51"/>
        <end position="148"/>
    </location>
</feature>
<feature type="region of interest" description="Disordered" evidence="4">
    <location>
        <begin position="83"/>
        <end position="110"/>
    </location>
</feature>
<feature type="compositionally biased region" description="Polar residues" evidence="4">
    <location>
        <begin position="93"/>
        <end position="109"/>
    </location>
</feature>
<feature type="modified residue" description="Phosphoserine" evidence="2">
    <location>
        <position position="102"/>
    </location>
</feature>
<reference key="1">
    <citation type="submission" date="2005-03" db="EMBL/GenBank/DDBJ databases">
        <title>Annotation of the Saccharomyces cerevisiae RM11-1a genome.</title>
        <authorList>
            <consortium name="The Broad Institute Genome Sequencing Platform"/>
            <person name="Birren B.W."/>
            <person name="Lander E.S."/>
            <person name="Galagan J.E."/>
            <person name="Nusbaum C."/>
            <person name="Devon K."/>
            <person name="Cuomo C."/>
            <person name="Jaffe D.B."/>
            <person name="Butler J."/>
            <person name="Alvarez P."/>
            <person name="Gnerre S."/>
            <person name="Grabherr M."/>
            <person name="Kleber M."/>
            <person name="Mauceli E.W."/>
            <person name="Brockman W."/>
            <person name="MacCallum I.A."/>
            <person name="Rounsley S."/>
            <person name="Young S.K."/>
            <person name="LaButti K."/>
            <person name="Pushparaj V."/>
            <person name="DeCaprio D."/>
            <person name="Crawford M."/>
            <person name="Koehrsen M."/>
            <person name="Engels R."/>
            <person name="Montgomery P."/>
            <person name="Pearson M."/>
            <person name="Howarth C."/>
            <person name="Larson L."/>
            <person name="Luoma S."/>
            <person name="White J."/>
            <person name="O'Leary S."/>
            <person name="Kodira C.D."/>
            <person name="Zeng Q."/>
            <person name="Yandava C."/>
            <person name="Alvarado L."/>
            <person name="Pratt S."/>
            <person name="Kruglyak L."/>
        </authorList>
    </citation>
    <scope>NUCLEOTIDE SEQUENCE [LARGE SCALE GENOMIC DNA]</scope>
    <source>
        <strain>RM11-1a</strain>
    </source>
</reference>
<accession>B3LM36</accession>